<keyword id="KW-0067">ATP-binding</keyword>
<keyword id="KW-0436">Ligase</keyword>
<keyword id="KW-0547">Nucleotide-binding</keyword>
<keyword id="KW-0648">Protein biosynthesis</keyword>
<keyword id="KW-1185">Reference proteome</keyword>
<protein>
    <recommendedName>
        <fullName evidence="1">Glutamyl-tRNA(Gln) amidotransferase subunit A</fullName>
        <shortName evidence="1">Glu-ADT subunit A</shortName>
        <ecNumber evidence="1">6.3.5.7</ecNumber>
    </recommendedName>
</protein>
<gene>
    <name evidence="1" type="primary">gatA</name>
    <name type="ordered locus">Nther_0464</name>
</gene>
<accession>B2A5W7</accession>
<feature type="chain" id="PRO_1000095153" description="Glutamyl-tRNA(Gln) amidotransferase subunit A">
    <location>
        <begin position="1"/>
        <end position="491"/>
    </location>
</feature>
<feature type="active site" description="Charge relay system" evidence="1">
    <location>
        <position position="79"/>
    </location>
</feature>
<feature type="active site" description="Charge relay system" evidence="1">
    <location>
        <position position="154"/>
    </location>
</feature>
<feature type="active site" description="Acyl-ester intermediate" evidence="1">
    <location>
        <position position="178"/>
    </location>
</feature>
<reference key="1">
    <citation type="submission" date="2008-04" db="EMBL/GenBank/DDBJ databases">
        <title>Complete sequence of chromosome of Natranaerobius thermophilus JW/NM-WN-LF.</title>
        <authorList>
            <consortium name="US DOE Joint Genome Institute"/>
            <person name="Copeland A."/>
            <person name="Lucas S."/>
            <person name="Lapidus A."/>
            <person name="Glavina del Rio T."/>
            <person name="Dalin E."/>
            <person name="Tice H."/>
            <person name="Bruce D."/>
            <person name="Goodwin L."/>
            <person name="Pitluck S."/>
            <person name="Chertkov O."/>
            <person name="Brettin T."/>
            <person name="Detter J.C."/>
            <person name="Han C."/>
            <person name="Kuske C.R."/>
            <person name="Schmutz J."/>
            <person name="Larimer F."/>
            <person name="Land M."/>
            <person name="Hauser L."/>
            <person name="Kyrpides N."/>
            <person name="Lykidis A."/>
            <person name="Mesbah N.M."/>
            <person name="Wiegel J."/>
        </authorList>
    </citation>
    <scope>NUCLEOTIDE SEQUENCE [LARGE SCALE GENOMIC DNA]</scope>
    <source>
        <strain>ATCC BAA-1301 / DSM 18059 / JW/NM-WN-LF</strain>
    </source>
</reference>
<dbReference type="EC" id="6.3.5.7" evidence="1"/>
<dbReference type="EMBL" id="CP001034">
    <property type="protein sequence ID" value="ACB84060.1"/>
    <property type="molecule type" value="Genomic_DNA"/>
</dbReference>
<dbReference type="RefSeq" id="WP_012446947.1">
    <property type="nucleotide sequence ID" value="NC_010718.1"/>
</dbReference>
<dbReference type="SMR" id="B2A5W7"/>
<dbReference type="FunCoup" id="B2A5W7">
    <property type="interactions" value="440"/>
</dbReference>
<dbReference type="STRING" id="457570.Nther_0464"/>
<dbReference type="KEGG" id="nth:Nther_0464"/>
<dbReference type="eggNOG" id="COG0154">
    <property type="taxonomic scope" value="Bacteria"/>
</dbReference>
<dbReference type="HOGENOM" id="CLU_009600_0_3_9"/>
<dbReference type="InParanoid" id="B2A5W7"/>
<dbReference type="OrthoDB" id="9811471at2"/>
<dbReference type="Proteomes" id="UP000001683">
    <property type="component" value="Chromosome"/>
</dbReference>
<dbReference type="GO" id="GO:0030956">
    <property type="term" value="C:glutamyl-tRNA(Gln) amidotransferase complex"/>
    <property type="evidence" value="ECO:0007669"/>
    <property type="project" value="InterPro"/>
</dbReference>
<dbReference type="GO" id="GO:0005524">
    <property type="term" value="F:ATP binding"/>
    <property type="evidence" value="ECO:0007669"/>
    <property type="project" value="UniProtKB-KW"/>
</dbReference>
<dbReference type="GO" id="GO:0050567">
    <property type="term" value="F:glutaminyl-tRNA synthase (glutamine-hydrolyzing) activity"/>
    <property type="evidence" value="ECO:0007669"/>
    <property type="project" value="UniProtKB-UniRule"/>
</dbReference>
<dbReference type="GO" id="GO:0006412">
    <property type="term" value="P:translation"/>
    <property type="evidence" value="ECO:0007669"/>
    <property type="project" value="UniProtKB-UniRule"/>
</dbReference>
<dbReference type="Gene3D" id="3.90.1300.10">
    <property type="entry name" value="Amidase signature (AS) domain"/>
    <property type="match status" value="1"/>
</dbReference>
<dbReference type="HAMAP" id="MF_00120">
    <property type="entry name" value="GatA"/>
    <property type="match status" value="1"/>
</dbReference>
<dbReference type="InterPro" id="IPR000120">
    <property type="entry name" value="Amidase"/>
</dbReference>
<dbReference type="InterPro" id="IPR020556">
    <property type="entry name" value="Amidase_CS"/>
</dbReference>
<dbReference type="InterPro" id="IPR023631">
    <property type="entry name" value="Amidase_dom"/>
</dbReference>
<dbReference type="InterPro" id="IPR036928">
    <property type="entry name" value="AS_sf"/>
</dbReference>
<dbReference type="InterPro" id="IPR004412">
    <property type="entry name" value="GatA"/>
</dbReference>
<dbReference type="NCBIfam" id="TIGR00132">
    <property type="entry name" value="gatA"/>
    <property type="match status" value="1"/>
</dbReference>
<dbReference type="PANTHER" id="PTHR11895:SF151">
    <property type="entry name" value="GLUTAMYL-TRNA(GLN) AMIDOTRANSFERASE SUBUNIT A"/>
    <property type="match status" value="1"/>
</dbReference>
<dbReference type="PANTHER" id="PTHR11895">
    <property type="entry name" value="TRANSAMIDASE"/>
    <property type="match status" value="1"/>
</dbReference>
<dbReference type="Pfam" id="PF01425">
    <property type="entry name" value="Amidase"/>
    <property type="match status" value="1"/>
</dbReference>
<dbReference type="PIRSF" id="PIRSF001221">
    <property type="entry name" value="Amidase_fungi"/>
    <property type="match status" value="1"/>
</dbReference>
<dbReference type="SUPFAM" id="SSF75304">
    <property type="entry name" value="Amidase signature (AS) enzymes"/>
    <property type="match status" value="1"/>
</dbReference>
<dbReference type="PROSITE" id="PS00571">
    <property type="entry name" value="AMIDASES"/>
    <property type="match status" value="1"/>
</dbReference>
<evidence type="ECO:0000255" key="1">
    <source>
        <dbReference type="HAMAP-Rule" id="MF_00120"/>
    </source>
</evidence>
<organism>
    <name type="scientific">Natranaerobius thermophilus (strain ATCC BAA-1301 / DSM 18059 / JW/NM-WN-LF)</name>
    <dbReference type="NCBI Taxonomy" id="457570"/>
    <lineage>
        <taxon>Bacteria</taxon>
        <taxon>Bacillati</taxon>
        <taxon>Bacillota</taxon>
        <taxon>Clostridia</taxon>
        <taxon>Natranaerobiales</taxon>
        <taxon>Natranaerobiaceae</taxon>
        <taxon>Natranaerobius</taxon>
    </lineage>
</organism>
<proteinExistence type="inferred from homology"/>
<comment type="function">
    <text evidence="1">Allows the formation of correctly charged Gln-tRNA(Gln) through the transamidation of misacylated Glu-tRNA(Gln) in organisms which lack glutaminyl-tRNA synthetase. The reaction takes place in the presence of glutamine and ATP through an activated gamma-phospho-Glu-tRNA(Gln).</text>
</comment>
<comment type="catalytic activity">
    <reaction evidence="1">
        <text>L-glutamyl-tRNA(Gln) + L-glutamine + ATP + H2O = L-glutaminyl-tRNA(Gln) + L-glutamate + ADP + phosphate + H(+)</text>
        <dbReference type="Rhea" id="RHEA:17521"/>
        <dbReference type="Rhea" id="RHEA-COMP:9681"/>
        <dbReference type="Rhea" id="RHEA-COMP:9684"/>
        <dbReference type="ChEBI" id="CHEBI:15377"/>
        <dbReference type="ChEBI" id="CHEBI:15378"/>
        <dbReference type="ChEBI" id="CHEBI:29985"/>
        <dbReference type="ChEBI" id="CHEBI:30616"/>
        <dbReference type="ChEBI" id="CHEBI:43474"/>
        <dbReference type="ChEBI" id="CHEBI:58359"/>
        <dbReference type="ChEBI" id="CHEBI:78520"/>
        <dbReference type="ChEBI" id="CHEBI:78521"/>
        <dbReference type="ChEBI" id="CHEBI:456216"/>
        <dbReference type="EC" id="6.3.5.7"/>
    </reaction>
</comment>
<comment type="subunit">
    <text evidence="1">Heterotrimer of A, B and C subunits.</text>
</comment>
<comment type="similarity">
    <text evidence="1">Belongs to the amidase family. GatA subfamily.</text>
</comment>
<sequence length="491" mass="53153">MKLHELTLMEVKRGLEQGDFSSEELVTSVYDRIEETEDHIKAYITLTKEQALAQSKEIDSQRAKGEELGPLAGIPVAIKDNICTKDVTTSCASKILEDFVPPYNATVISKLAEAGAIIVGKTNMDEFAMGSSTENSAFFVTSNPWDTERVPGGSSGGSAASVASAQVPLALGSDTGGSIRQPASFCGVVGMKPTYGRVSRYGLVAFASSLDQIGPLSKNVEDTALALDIISGHDHMDSTSVDLEVPNHTDFLNQDIDELTIGIPKEYYELVDNDVKSLVESSLQSIEPEAGNYRQVSLPTTEHALSAYYLIAPAEASSNLARFDGVRYGQRFATDDLKTMYNQTRKEGFGNEVKQRVMLGTYALSAGYYDALYLKALKVRSLIKQEFEQVFSECDVLIAPTTPTVPFREGENVDDPLTMYKNDICTAPVNLAGLPSISIPCGFSNGLPVGLQVIGKAFDEGKVIQVAHKIEQMLQVFKNAPQQGLDNQGGK</sequence>
<name>GATA_NATTJ</name>